<proteinExistence type="evidence at protein level"/>
<sequence>MSAVGLVLLVLALRLRATTVKPEEGSFCSNSQVAFRDACYEFVPLGRTFRDAQSWCEGQGGHLVFIQDEGTQWFLQKHISQDREWWIGLTWNLARNGTTEGPGTWLDTSNVTYSNWHGGQAAAAPDTCGHIGRGPSSEWVTSDCAQTFAFMCEFRVGQSLACEGLNATVHCGLGQVIQVQDAVYGRQNPHFCTQDAGRPSDLEQGCSWANVKEEVAGQCQELQSCQVAADETYFGNLCPTQGSYLWVQYQCREALQLMVSSESFIFDNVTISLTWLLSPYIGNLSCIISTGDSHTFDPYNPPSVSSNVTHQFTSPGEFTVFAECTTSEWHVTAQRQVTVRDKMETLSVTACSGLSQSGAGPLCQAVFGDPLWIQVELDGGTGVTYTVLLGDITLAESTTQKGSLPYNLILDRETQKLMGPGRHRLEIQATGNTTTSTISRNITVHLVELLSGLQASWASDHLELGQDLLITISLAQGTPEELTFEVAGLNATFSHEQVSFGEPFGICRLAVPVEGTFLVTMLVRNAFSNLSLEIGNITITAPSGLQEPSGMNAEGKSKDKGDMEVYIQPGPYVDPFTTVTLGWPDNDKELRFQWSCGSCWALWSSCVERQLLRTDQRELVVPASCLPPPDSAVTLRLAVLRGQELENRAEQCLYVSAPWELRPRVSCERNCRPVNASKDILLRVTMGEDSPVAMFSWYLDNTPTEQAEPLLDACRLRGFWPRSLTLLQSNTSTLLLNSSFLQSRGEVIRIRATALTRHAYGEDTYVISTVPPREVPACTIAPEEGTVLTSFAIFCNASTALGPLEFCFCLESGSCLHCGPEPALPSVYLPLGEENNDFVLTVVISATNRAGDTQQTQAMAKVALGDTCVEDVAFQAAVSEKIPTALQGEGGPEQLLQLAKAVSSMLNQEHESQGSGQSLSIDVRQKVREHVLGSLSAVTTGLEDVQRVQELAEVLREVTCRSKELTPSAQWEASLALQHASEALLTVSAKARPEDQRRQAATRDLFQAVGSVLEASLSNRPEEPAEASSSQIATVLRLLRVMEHVQTTLLLGKLPGGLPAMLATPSISVYTNRIQPWSWQGSSLRPDAADSATFMLPAASSLSSLEGGQEPVDIKIMSFPKSPFPARSHFDVSGTVGGLRVTSPSGQLIPVKNLSENIEILLPRHSQRHSQPTVLNLTSPEALWVNVTSGEATLGIQLHWRPDIALTLSLGYGYHPNKSSYDAQTHLVPMVAPDELPTWILSPQDLRFGEGVYYLTVVPESDLEPAPGRDLTVGITTFLSHCVFWDEVQETWDDSGCQVGPRTSPYQTHCLCNHLTFFGSTFLVMSNAINIHQTAELFATFEDNPVVVTTVGCLCVVYVLVVIWARRKDAQDQAKVKVTVLEDNDPFAQYHYLVTVYTGHRRGAATSSKVTVTLYGLDGEREPHHLADPDTPVFERGAVDAFLLSTLFPLGELRSLRLWHDNSGDRPSWYVSRVLVYDLVMDRKWYFLCNSWLSINVGDCVLDKVFPVATEQDRKQFSHLFFMKTSAGFQDGHIWYSIFSRCARSSFTRVQRVSCCFSLLLCTMLTSIMFWGVPKDPAEQKMDLGKIEFTWQEVMIGLESSILMFPINLLIVQIFQNTRPRVAKEQNTGKWDRGSPNLTPSPQPMEDGLLTPEAVTKDVSRIVSSLFKALKVPSPALGWDSVNLMDINSLLALVEDVIYPQNTSGQVFWEEAKKREDPVTLTLGSSEMKEKSQCPKPKAARSGPWKDSAYRQCLYLQLEHVEQELRLVGPRGFSQPHSHAQALRQLQTLKGGLGVQPGTWAPAHASALQVSKPPQGLPWWCILVGWLLVAATSGVAAFFTMLYGLHYGRASSLRWLISMAVSFVESMFVTQPLKVLGFAAFFALVLKRVDDEEDTVAPLPGHLLGPDPYALFRARRNSSRDVYQPPLTAAIEKMKTTHLKEQKAFALIREILAYLGFLWMLLLVAYGQRDPSAYHLNRHLQHSFTRGFSGVLGFREFFKWANTTLVSNLYGHPPGFITDGNSKLVGSAQIRQVRVQESSCPLAQQPQAYLNGCRAPYSLDAEDMADYGEGWNATTLSEWQYQSQDQRQGYPIWGKLTVYRGGGYVVPLGTDRQSTSRILRYLFDNTWLDALTRAVFVESTVYNANVNLFCIVTLTLETSALGTFFTHAALQSLRLYPFTDGWHPFVVAAELIYFLFLLYYMVVQGKRMSKETWGYFCSKWNLLELAIILASWSALAVFVKRAVLAERDLQRCRNHREEGISFSETAAADAALGYIIAFLVLLSTVKLWHLLRLNPKMNMITAALRRAWGDISGFMIVILTMLLAYSIASNLIFGWKLRSYKTLFDAAETMVSLQLGIFNYEEVLDYSPVLGSFLIGSCIVFMTFVVLNLFISVILVAFSEEQKYYQLSEEGEIVDLLLMKILSFLGIKSKREEPGSSREQPGSLSQTRHSRPAQALPKD</sequence>
<comment type="function">
    <text evidence="12">May function as a G-protein-coupled receptor.</text>
</comment>
<comment type="subunit">
    <text evidence="12">May interact via its C-terminus with GNAS and GNAI1.</text>
</comment>
<comment type="subcellular location">
    <subcellularLocation>
        <location evidence="17">Membrane</location>
        <topology evidence="17">Multi-pass membrane protein</topology>
    </subcellularLocation>
</comment>
<comment type="alternative products">
    <event type="alternative splicing"/>
    <isoform>
        <id>Q7Z442-1</id>
        <name>1</name>
        <sequence type="displayed"/>
    </isoform>
    <isoform>
        <id>Q7Z442-2</id>
        <name>2</name>
        <name>Long isoform</name>
        <sequence type="described" ref="VSP_031942"/>
    </isoform>
    <isoform>
        <id>Q7Z442-3</id>
        <name>3</name>
        <sequence type="described" ref="VSP_031946 VSP_031948"/>
    </isoform>
    <isoform>
        <id>Q7Z442-4</id>
        <name>4</name>
        <sequence type="described" ref="VSP_031942 VSP_031946 VSP_031948"/>
    </isoform>
    <isoform>
        <id>Q7Z442-6</id>
        <name>6</name>
        <sequence type="described" ref="VSP_031942 VSP_031944 VSP_031945 VSP_031947"/>
    </isoform>
</comment>
<comment type="tissue specificity">
    <text evidence="10">Expressed in all tissues tested including brain, placenta, mammary gland, testis, lung and liver. Highest expression in skeletal muscle. Isoform 2 is expressed in heart and kidney.</text>
</comment>
<comment type="developmental stage">
    <text>Expressed in fetal heart.</text>
</comment>
<comment type="PTM">
    <text evidence="4">Autoproteolytically processed at the GPS region of the GAIN-B domain; this cleavage modulates receptor activity.</text>
</comment>
<comment type="similarity">
    <text evidence="17">Belongs to the polycystin family.</text>
</comment>
<comment type="caution">
    <text evidence="17">PKD1L2 is both a gene and a pseudogene in the human population. The reference genome assembly corresponds currently to the non-functional allele while the sequence shown here is the one of the functional protein.</text>
</comment>
<comment type="sequence caution" evidence="17">
    <conflict type="frameshift">
        <sequence resource="EMBL-CDS" id="AAQ73173"/>
    </conflict>
</comment>
<comment type="sequence caution" evidence="17">
    <conflict type="miscellaneous discrepancy">
        <sequence resource="EMBL-CDS" id="BAB67772"/>
    </conflict>
    <text>Intron retention.</text>
</comment>
<comment type="sequence caution" evidence="17">
    <conflict type="erroneous initiation">
        <sequence resource="EMBL-CDS" id="BAC05222"/>
    </conflict>
    <text>Truncated N-terminus.</text>
</comment>
<comment type="sequence caution" evidence="17">
    <conflict type="erroneous translation">
        <sequence resource="EMBL-CDS" id="BAD18529"/>
    </conflict>
    <text>Wrong CDS prediction.</text>
</comment>
<name>PK1L2_HUMAN</name>
<reference key="1">
    <citation type="journal article" date="2003" name="Genomics">
        <title>Identification of two novel polycystic kidney disease-1-like genes in human and mouse genomes.</title>
        <authorList>
            <person name="Li A."/>
            <person name="Tian X."/>
            <person name="Sung S.-W."/>
            <person name="Somlo S."/>
        </authorList>
    </citation>
    <scope>NUCLEOTIDE SEQUENCE [MRNA] (ISOFORM 1)</scope>
    <scope>ALTERNATIVE SPLICING</scope>
    <scope>TISSUE SPECIFICITY</scope>
    <scope>VARIANTS ARG-73; ASN-77; ILE-183; ALA-301; PRO-711; VAL-863; PRO-1326; PHE-2139 AND ILE-2315</scope>
    <source>
        <tissue>Testis</tissue>
    </source>
</reference>
<reference key="2">
    <citation type="journal article" date="2003" name="Genomics">
        <authorList>
            <person name="Li A."/>
            <person name="Tian X."/>
            <person name="Sung S.-W."/>
            <person name="Somlo S."/>
        </authorList>
    </citation>
    <scope>ERRATUM OF PUBMED:12782129</scope>
</reference>
<reference key="3">
    <citation type="journal article" date="2004" name="Genomics">
        <title>Polycystin-1L2 is a novel G-protein-binding protein.</title>
        <authorList>
            <person name="Yuasa T."/>
            <person name="Takakura A."/>
            <person name="Denker B.M."/>
            <person name="Venugopal B."/>
            <person name="Zhou J."/>
        </authorList>
    </citation>
    <scope>NUCLEOTIDE SEQUENCE [MRNA] (ISOFORM 2)</scope>
    <scope>FUNCTION</scope>
    <scope>SUBUNIT</scope>
    <scope>ALTERNATIVE SPLICING</scope>
    <scope>INTERACTION WITH GNAS AND GNAI1</scope>
    <scope>VARIANTS PRO-1326; ASP-1330; ARG-2036; LEU-2046; THR-2055; PHE-2139 AND ARG-2209</scope>
</reference>
<reference key="4">
    <citation type="journal article" date="2004" name="Nat. Genet.">
        <title>Complete sequencing and characterization of 21,243 full-length human cDNAs.</title>
        <authorList>
            <person name="Ota T."/>
            <person name="Suzuki Y."/>
            <person name="Nishikawa T."/>
            <person name="Otsuki T."/>
            <person name="Sugiyama T."/>
            <person name="Irie R."/>
            <person name="Wakamatsu A."/>
            <person name="Hayashi K."/>
            <person name="Sato H."/>
            <person name="Nagai K."/>
            <person name="Kimura K."/>
            <person name="Makita H."/>
            <person name="Sekine M."/>
            <person name="Obayashi M."/>
            <person name="Nishi T."/>
            <person name="Shibahara T."/>
            <person name="Tanaka T."/>
            <person name="Ishii S."/>
            <person name="Yamamoto J."/>
            <person name="Saito K."/>
            <person name="Kawai Y."/>
            <person name="Isono Y."/>
            <person name="Nakamura Y."/>
            <person name="Nagahari K."/>
            <person name="Murakami K."/>
            <person name="Yasuda T."/>
            <person name="Iwayanagi T."/>
            <person name="Wagatsuma M."/>
            <person name="Shiratori A."/>
            <person name="Sudo H."/>
            <person name="Hosoiri T."/>
            <person name="Kaku Y."/>
            <person name="Kodaira H."/>
            <person name="Kondo H."/>
            <person name="Sugawara M."/>
            <person name="Takahashi M."/>
            <person name="Kanda K."/>
            <person name="Yokoi T."/>
            <person name="Furuya T."/>
            <person name="Kikkawa E."/>
            <person name="Omura Y."/>
            <person name="Abe K."/>
            <person name="Kamihara K."/>
            <person name="Katsuta N."/>
            <person name="Sato K."/>
            <person name="Tanikawa M."/>
            <person name="Yamazaki M."/>
            <person name="Ninomiya K."/>
            <person name="Ishibashi T."/>
            <person name="Yamashita H."/>
            <person name="Murakawa K."/>
            <person name="Fujimori K."/>
            <person name="Tanai H."/>
            <person name="Kimata M."/>
            <person name="Watanabe M."/>
            <person name="Hiraoka S."/>
            <person name="Chiba Y."/>
            <person name="Ishida S."/>
            <person name="Ono Y."/>
            <person name="Takiguchi S."/>
            <person name="Watanabe S."/>
            <person name="Yosida M."/>
            <person name="Hotuta T."/>
            <person name="Kusano J."/>
            <person name="Kanehori K."/>
            <person name="Takahashi-Fujii A."/>
            <person name="Hara H."/>
            <person name="Tanase T.-O."/>
            <person name="Nomura Y."/>
            <person name="Togiya S."/>
            <person name="Komai F."/>
            <person name="Hara R."/>
            <person name="Takeuchi K."/>
            <person name="Arita M."/>
            <person name="Imose N."/>
            <person name="Musashino K."/>
            <person name="Yuuki H."/>
            <person name="Oshima A."/>
            <person name="Sasaki N."/>
            <person name="Aotsuka S."/>
            <person name="Yoshikawa Y."/>
            <person name="Matsunawa H."/>
            <person name="Ichihara T."/>
            <person name="Shiohata N."/>
            <person name="Sano S."/>
            <person name="Moriya S."/>
            <person name="Momiyama H."/>
            <person name="Satoh N."/>
            <person name="Takami S."/>
            <person name="Terashima Y."/>
            <person name="Suzuki O."/>
            <person name="Nakagawa S."/>
            <person name="Senoh A."/>
            <person name="Mizoguchi H."/>
            <person name="Goto Y."/>
            <person name="Shimizu F."/>
            <person name="Wakebe H."/>
            <person name="Hishigaki H."/>
            <person name="Watanabe T."/>
            <person name="Sugiyama A."/>
            <person name="Takemoto M."/>
            <person name="Kawakami B."/>
            <person name="Yamazaki M."/>
            <person name="Watanabe K."/>
            <person name="Kumagai A."/>
            <person name="Itakura S."/>
            <person name="Fukuzumi Y."/>
            <person name="Fujimori Y."/>
            <person name="Komiyama M."/>
            <person name="Tashiro H."/>
            <person name="Tanigami A."/>
            <person name="Fujiwara T."/>
            <person name="Ono T."/>
            <person name="Yamada K."/>
            <person name="Fujii Y."/>
            <person name="Ozaki K."/>
            <person name="Hirao M."/>
            <person name="Ohmori Y."/>
            <person name="Kawabata A."/>
            <person name="Hikiji T."/>
            <person name="Kobatake N."/>
            <person name="Inagaki H."/>
            <person name="Ikema Y."/>
            <person name="Okamoto S."/>
            <person name="Okitani R."/>
            <person name="Kawakami T."/>
            <person name="Noguchi S."/>
            <person name="Itoh T."/>
            <person name="Shigeta K."/>
            <person name="Senba T."/>
            <person name="Matsumura K."/>
            <person name="Nakajima Y."/>
            <person name="Mizuno T."/>
            <person name="Morinaga M."/>
            <person name="Sasaki M."/>
            <person name="Togashi T."/>
            <person name="Oyama M."/>
            <person name="Hata H."/>
            <person name="Watanabe M."/>
            <person name="Komatsu T."/>
            <person name="Mizushima-Sugano J."/>
            <person name="Satoh T."/>
            <person name="Shirai Y."/>
            <person name="Takahashi Y."/>
            <person name="Nakagawa K."/>
            <person name="Okumura K."/>
            <person name="Nagase T."/>
            <person name="Nomura N."/>
            <person name="Kikuchi H."/>
            <person name="Masuho Y."/>
            <person name="Yamashita R."/>
            <person name="Nakai K."/>
            <person name="Yada T."/>
            <person name="Nakamura Y."/>
            <person name="Ohara O."/>
            <person name="Isogai T."/>
            <person name="Sugano S."/>
        </authorList>
    </citation>
    <scope>NUCLEOTIDE SEQUENCE [LARGE SCALE MRNA] (ISOFORM 6)</scope>
    <scope>NUCLEOTIDE SEQUENCE [LARGE SCALE MRNA] OF 474-2459 (ISOFORM 3)</scope>
    <scope>NUCLEOTIDE SEQUENCE [LARGE SCALE MRNA] OF 2079-2459 (ISOFORMS 1/2/3/4)</scope>
    <scope>VARIANTS PRO-711; PHE-2139; ARG-2209 AND ILE-2315</scope>
    <source>
        <tissue>Amygdala</tissue>
        <tissue>Hippocampus</tissue>
        <tissue>Kidney</tissue>
    </source>
</reference>
<reference key="5">
    <citation type="journal article" date="2001" name="DNA Res.">
        <title>Prediction of the coding sequences of unidentified human genes. XXI. The complete sequences of 60 new cDNA clones from brain which code for large proteins.</title>
        <authorList>
            <person name="Nagase T."/>
            <person name="Kikuno R."/>
            <person name="Ohara O."/>
        </authorList>
    </citation>
    <scope>NUCLEOTIDE SEQUENCE [LARGE SCALE MRNA] OF 553-2016 (ISOFORM 1)</scope>
    <scope>VARIANTS PRO-711; VAL-863; PRO-1326; ASP-1330; VAL-1331 AND VAL-1867</scope>
    <source>
        <tissue>Brain</tissue>
    </source>
</reference>
<reference key="6">
    <citation type="journal article" date="2004" name="Nature">
        <title>The sequence and analysis of duplication-rich human chromosome 16.</title>
        <authorList>
            <person name="Martin J."/>
            <person name="Han C."/>
            <person name="Gordon L.A."/>
            <person name="Terry A."/>
            <person name="Prabhakar S."/>
            <person name="She X."/>
            <person name="Xie G."/>
            <person name="Hellsten U."/>
            <person name="Chan Y.M."/>
            <person name="Altherr M."/>
            <person name="Couronne O."/>
            <person name="Aerts A."/>
            <person name="Bajorek E."/>
            <person name="Black S."/>
            <person name="Blumer H."/>
            <person name="Branscomb E."/>
            <person name="Brown N.C."/>
            <person name="Bruno W.J."/>
            <person name="Buckingham J.M."/>
            <person name="Callen D.F."/>
            <person name="Campbell C.S."/>
            <person name="Campbell M.L."/>
            <person name="Campbell E.W."/>
            <person name="Caoile C."/>
            <person name="Challacombe J.F."/>
            <person name="Chasteen L.A."/>
            <person name="Chertkov O."/>
            <person name="Chi H.C."/>
            <person name="Christensen M."/>
            <person name="Clark L.M."/>
            <person name="Cohn J.D."/>
            <person name="Denys M."/>
            <person name="Detter J.C."/>
            <person name="Dickson M."/>
            <person name="Dimitrijevic-Bussod M."/>
            <person name="Escobar J."/>
            <person name="Fawcett J.J."/>
            <person name="Flowers D."/>
            <person name="Fotopulos D."/>
            <person name="Glavina T."/>
            <person name="Gomez M."/>
            <person name="Gonzales E."/>
            <person name="Goodstein D."/>
            <person name="Goodwin L.A."/>
            <person name="Grady D.L."/>
            <person name="Grigoriev I."/>
            <person name="Groza M."/>
            <person name="Hammon N."/>
            <person name="Hawkins T."/>
            <person name="Haydu L."/>
            <person name="Hildebrand C.E."/>
            <person name="Huang W."/>
            <person name="Israni S."/>
            <person name="Jett J."/>
            <person name="Jewett P.B."/>
            <person name="Kadner K."/>
            <person name="Kimball H."/>
            <person name="Kobayashi A."/>
            <person name="Krawczyk M.-C."/>
            <person name="Leyba T."/>
            <person name="Longmire J.L."/>
            <person name="Lopez F."/>
            <person name="Lou Y."/>
            <person name="Lowry S."/>
            <person name="Ludeman T."/>
            <person name="Manohar C.F."/>
            <person name="Mark G.A."/>
            <person name="McMurray K.L."/>
            <person name="Meincke L.J."/>
            <person name="Morgan J."/>
            <person name="Moyzis R.K."/>
            <person name="Mundt M.O."/>
            <person name="Munk A.C."/>
            <person name="Nandkeshwar R.D."/>
            <person name="Pitluck S."/>
            <person name="Pollard M."/>
            <person name="Predki P."/>
            <person name="Parson-Quintana B."/>
            <person name="Ramirez L."/>
            <person name="Rash S."/>
            <person name="Retterer J."/>
            <person name="Ricke D.O."/>
            <person name="Robinson D.L."/>
            <person name="Rodriguez A."/>
            <person name="Salamov A."/>
            <person name="Saunders E.H."/>
            <person name="Scott D."/>
            <person name="Shough T."/>
            <person name="Stallings R.L."/>
            <person name="Stalvey M."/>
            <person name="Sutherland R.D."/>
            <person name="Tapia R."/>
            <person name="Tesmer J.G."/>
            <person name="Thayer N."/>
            <person name="Thompson L.S."/>
            <person name="Tice H."/>
            <person name="Torney D.C."/>
            <person name="Tran-Gyamfi M."/>
            <person name="Tsai M."/>
            <person name="Ulanovsky L.E."/>
            <person name="Ustaszewska A."/>
            <person name="Vo N."/>
            <person name="White P.S."/>
            <person name="Williams A.L."/>
            <person name="Wills P.L."/>
            <person name="Wu J.-R."/>
            <person name="Wu K."/>
            <person name="Yang J."/>
            <person name="DeJong P."/>
            <person name="Bruce D."/>
            <person name="Doggett N.A."/>
            <person name="Deaven L."/>
            <person name="Schmutz J."/>
            <person name="Grimwood J."/>
            <person name="Richardson P."/>
            <person name="Rokhsar D.S."/>
            <person name="Eichler E.E."/>
            <person name="Gilna P."/>
            <person name="Lucas S.M."/>
            <person name="Myers R.M."/>
            <person name="Rubin E.M."/>
            <person name="Pennacchio L.A."/>
        </authorList>
    </citation>
    <scope>NUCLEOTIDE SEQUENCE [LARGE SCALE GENOMIC DNA]</scope>
</reference>
<reference key="7">
    <citation type="journal article" date="2004" name="Genome Res.">
        <title>The status, quality, and expansion of the NIH full-length cDNA project: the Mammalian Gene Collection (MGC).</title>
        <authorList>
            <consortium name="The MGC Project Team"/>
        </authorList>
    </citation>
    <scope>NUCLEOTIDE SEQUENCE [LARGE SCALE MRNA] (ISOFORM 4)</scope>
    <scope>VARIANT PRO-711</scope>
    <source>
        <tissue>Skin</tissue>
    </source>
</reference>
<feature type="signal peptide" evidence="2">
    <location>
        <begin position="1"/>
        <end position="17"/>
    </location>
</feature>
<feature type="chain" id="PRO_0000322576" description="Polycystin-1-like protein 2">
    <location>
        <begin position="18"/>
        <end position="2459"/>
    </location>
</feature>
<feature type="topological domain" description="Extracellular" evidence="2">
    <location>
        <begin position="18"/>
        <end position="1344"/>
    </location>
</feature>
<feature type="transmembrane region" description="Helical" evidence="2">
    <location>
        <begin position="1345"/>
        <end position="1365"/>
    </location>
</feature>
<feature type="topological domain" description="Cytoplasmic" evidence="2">
    <location>
        <begin position="1366"/>
        <end position="1552"/>
    </location>
</feature>
<feature type="transmembrane region" description="Helical" evidence="2">
    <location>
        <begin position="1553"/>
        <end position="1573"/>
    </location>
</feature>
<feature type="topological domain" description="Extracellular" evidence="2">
    <location>
        <begin position="1574"/>
        <end position="1594"/>
    </location>
</feature>
<feature type="transmembrane region" description="Helical" evidence="2">
    <location>
        <begin position="1595"/>
        <end position="1615"/>
    </location>
</feature>
<feature type="topological domain" description="Cytoplasmic" evidence="2">
    <location>
        <begin position="1616"/>
        <end position="1818"/>
    </location>
</feature>
<feature type="transmembrane region" description="Helical" evidence="2">
    <location>
        <begin position="1819"/>
        <end position="1839"/>
    </location>
</feature>
<feature type="topological domain" description="Extracellular" evidence="2">
    <location>
        <begin position="1840"/>
        <end position="1865"/>
    </location>
</feature>
<feature type="transmembrane region" description="Helical" evidence="2">
    <location>
        <begin position="1866"/>
        <end position="1886"/>
    </location>
</feature>
<feature type="topological domain" description="Cytoplasmic" evidence="2">
    <location>
        <begin position="1887"/>
        <end position="1943"/>
    </location>
</feature>
<feature type="transmembrane region" description="Helical" evidence="2">
    <location>
        <begin position="1944"/>
        <end position="1964"/>
    </location>
</feature>
<feature type="topological domain" description="Extracellular" evidence="2">
    <location>
        <begin position="1965"/>
        <end position="2143"/>
    </location>
</feature>
<feature type="transmembrane region" description="Helical" evidence="2">
    <location>
        <begin position="2144"/>
        <end position="2166"/>
    </location>
</feature>
<feature type="topological domain" description="Cytoplasmic" evidence="2">
    <location>
        <begin position="2167"/>
        <end position="2182"/>
    </location>
</feature>
<feature type="transmembrane region" description="Helical" evidence="2">
    <location>
        <begin position="2183"/>
        <end position="2203"/>
    </location>
</feature>
<feature type="topological domain" description="Extracellular" evidence="2">
    <location>
        <begin position="2204"/>
        <end position="2218"/>
    </location>
</feature>
<feature type="transmembrane region" description="Helical" evidence="2">
    <location>
        <begin position="2219"/>
        <end position="2239"/>
    </location>
</feature>
<feature type="topological domain" description="Cytoplasmic" evidence="2">
    <location>
        <begin position="2240"/>
        <end position="2270"/>
    </location>
</feature>
<feature type="transmembrane region" description="Helical" evidence="2">
    <location>
        <begin position="2271"/>
        <end position="2291"/>
    </location>
</feature>
<feature type="topological domain" description="Extracellular" evidence="2">
    <location>
        <begin position="2292"/>
        <end position="2312"/>
    </location>
</feature>
<feature type="transmembrane region" description="Helical" evidence="2">
    <location>
        <begin position="2313"/>
        <end position="2333"/>
    </location>
</feature>
<feature type="topological domain" description="Cytoplasmic" evidence="2">
    <location>
        <begin position="2334"/>
        <end position="2377"/>
    </location>
</feature>
<feature type="transmembrane region" description="Helical" evidence="2">
    <location>
        <begin position="2378"/>
        <end position="2398"/>
    </location>
</feature>
<feature type="topological domain" description="Extracellular" evidence="2">
    <location>
        <begin position="2399"/>
        <end position="2459"/>
    </location>
</feature>
<feature type="domain" description="C-type lectin" evidence="3">
    <location>
        <begin position="35"/>
        <end position="153"/>
    </location>
</feature>
<feature type="domain" description="SUEL-type lectin" evidence="6">
    <location>
        <begin position="161"/>
        <end position="252"/>
    </location>
</feature>
<feature type="domain" description="REJ" evidence="7">
    <location>
        <begin position="422"/>
        <end position="1123"/>
    </location>
</feature>
<feature type="domain" description="GAIN-B" evidence="4">
    <location>
        <begin position="1173"/>
        <end position="1329"/>
    </location>
</feature>
<feature type="domain" description="PLAT" evidence="5">
    <location>
        <begin position="1390"/>
        <end position="1507"/>
    </location>
</feature>
<feature type="region of interest" description="GPS" evidence="4">
    <location>
        <begin position="1282"/>
        <end position="1329"/>
    </location>
</feature>
<feature type="region of interest" description="Disordered" evidence="8">
    <location>
        <begin position="1625"/>
        <end position="1649"/>
    </location>
</feature>
<feature type="region of interest" description="Channel pore-region">
    <location>
        <begin position="2340"/>
        <end position="2362"/>
    </location>
</feature>
<feature type="region of interest" description="Interaction with GNAS and GNAI1" evidence="12">
    <location>
        <begin position="2379"/>
        <end position="2459"/>
    </location>
</feature>
<feature type="region of interest" description="Disordered" evidence="8">
    <location>
        <begin position="2431"/>
        <end position="2459"/>
    </location>
</feature>
<feature type="compositionally biased region" description="Polar residues" evidence="8">
    <location>
        <begin position="2437"/>
        <end position="2447"/>
    </location>
</feature>
<feature type="site" description="Cleavage; by autolysis" evidence="4">
    <location>
        <begin position="1315"/>
        <end position="1316"/>
    </location>
</feature>
<feature type="glycosylation site" description="N-linked (GlcNAc...) asparagine" evidence="2">
    <location>
        <position position="96"/>
    </location>
</feature>
<feature type="glycosylation site" description="N-linked (GlcNAc...) asparagine" evidence="2">
    <location>
        <position position="110"/>
    </location>
</feature>
<feature type="glycosylation site" description="N-linked (GlcNAc...) asparagine" evidence="2">
    <location>
        <position position="268"/>
    </location>
</feature>
<feature type="glycosylation site" description="N-linked (GlcNAc...) asparagine" evidence="2">
    <location>
        <position position="307"/>
    </location>
</feature>
<feature type="glycosylation site" description="N-linked (GlcNAc...) asparagine" evidence="2">
    <location>
        <position position="441"/>
    </location>
</feature>
<feature type="glycosylation site" description="N-linked (GlcNAc...) asparagine" evidence="2">
    <location>
        <position position="536"/>
    </location>
</feature>
<feature type="glycosylation site" description="N-linked (GlcNAc...) asparagine" evidence="2">
    <location>
        <position position="1176"/>
    </location>
</feature>
<feature type="glycosylation site" description="N-linked (GlcNAc...) asparagine" evidence="2">
    <location>
        <position position="1186"/>
    </location>
</feature>
<feature type="disulfide bond" evidence="1">
    <location>
        <begin position="56"/>
        <end position="152"/>
    </location>
</feature>
<feature type="disulfide bond" evidence="1">
    <location>
        <begin position="128"/>
        <end position="144"/>
    </location>
</feature>
<feature type="disulfide bond" evidence="4">
    <location>
        <begin position="1282"/>
        <end position="1310"/>
    </location>
</feature>
<feature type="disulfide bond" evidence="4">
    <location>
        <begin position="1297"/>
        <end position="1312"/>
    </location>
</feature>
<feature type="splice variant" id="VSP_031942" description="In isoform 2, isoform 4 and isoform 6." evidence="14 15 16">
    <location>
        <begin position="1"/>
        <end position="685"/>
    </location>
</feature>
<feature type="splice variant" id="VSP_031944" description="In isoform 6." evidence="14">
    <location>
        <begin position="754"/>
        <end position="812"/>
    </location>
</feature>
<feature type="splice variant" id="VSP_031945" description="In isoform 6." evidence="14">
    <original>REHVLGSLSAVTTGLEDVQRVQELAEVLREVTCRSKELTPSAQWEASLALQHASEAL</original>
    <variation>PVGSWGAPFIPFLWGPRVCVRPFGLWIKVHGSGEKPVVSPKRLTPPPSLVFWVSDIK</variation>
    <location>
        <begin position="928"/>
        <end position="984"/>
    </location>
</feature>
<feature type="splice variant" id="VSP_031946" description="In isoform 3 and isoform 4." evidence="14 16">
    <original>WEASLALQHASEALLTVSAKA</original>
    <variation>GSCMGDSWEGAPPAAHVSHAR</variation>
    <location>
        <begin position="971"/>
        <end position="991"/>
    </location>
</feature>
<feature type="splice variant" id="VSP_031947" description="In isoform 6." evidence="14">
    <location>
        <begin position="985"/>
        <end position="2459"/>
    </location>
</feature>
<feature type="splice variant" id="VSP_031948" description="In isoform 3 and isoform 4." evidence="14 16">
    <location>
        <begin position="992"/>
        <end position="2459"/>
    </location>
</feature>
<feature type="sequence variant" id="VAR_039427" description="In dbSNP:rs9924530.">
    <original>V</original>
    <variation>A</variation>
    <location>
        <position position="20"/>
    </location>
</feature>
<feature type="sequence variant" id="VAR_039428" description="In dbSNP:rs9924371." evidence="10">
    <original>W</original>
    <variation>R</variation>
    <location>
        <position position="73"/>
    </location>
</feature>
<feature type="sequence variant" id="VAR_039429" description="In dbSNP:rs9934272." evidence="10">
    <original>K</original>
    <variation>N</variation>
    <location>
        <position position="77"/>
    </location>
</feature>
<feature type="sequence variant" id="VAR_039430" description="In dbSNP:rs7191351.">
    <original>Q</original>
    <variation>L</variation>
    <location>
        <position position="120"/>
    </location>
</feature>
<feature type="sequence variant" id="VAR_039431" description="In dbSNP:rs7185774.">
    <original>G</original>
    <variation>D</variation>
    <location>
        <position position="129"/>
    </location>
</feature>
<feature type="sequence variant" id="VAR_039432" description="In dbSNP:rs35528333.">
    <original>V</original>
    <variation>I</variation>
    <location>
        <position position="156"/>
    </location>
</feature>
<feature type="sequence variant" id="VAR_039433" description="In dbSNP:rs35970134.">
    <original>C</original>
    <variation>S</variation>
    <location>
        <position position="162"/>
    </location>
</feature>
<feature type="sequence variant" id="VAR_039434" description="In dbSNP:rs36099350.">
    <original>V</original>
    <variation>M</variation>
    <location>
        <position position="169"/>
    </location>
</feature>
<feature type="sequence variant" id="VAR_039435" description="In dbSNP:rs8060294.">
    <original>L</original>
    <variation>S</variation>
    <location>
        <position position="173"/>
    </location>
</feature>
<feature type="sequence variant" id="VAR_039436" description="In dbSNP:rs12933806." evidence="10">
    <original>V</original>
    <variation>I</variation>
    <location>
        <position position="183"/>
    </location>
</feature>
<feature type="sequence variant" id="VAR_039437" description="In dbSNP:rs34719852.">
    <original>G</original>
    <variation>R</variation>
    <location>
        <position position="205"/>
    </location>
</feature>
<feature type="sequence variant" id="VAR_039438" description="In dbSNP:rs6564838.">
    <original>E</original>
    <variation>G</variation>
    <location>
        <position position="221"/>
    </location>
</feature>
<feature type="sequence variant" id="VAR_039439" description="In dbSNP:rs6420424.">
    <original>R</original>
    <variation>W</variation>
    <location>
        <position position="252"/>
    </location>
</feature>
<feature type="sequence variant" id="VAR_039440" description="In dbSNP:rs11150370." evidence="10">
    <original>P</original>
    <variation>A</variation>
    <location>
        <position position="301"/>
    </location>
</feature>
<feature type="sequence variant" id="VAR_039441" description="In dbSNP:rs9937169.">
    <original>N</original>
    <variation>S</variation>
    <location>
        <position position="407"/>
    </location>
</feature>
<feature type="sequence variant" id="VAR_039442" description="In dbSNP:rs7194871.">
    <original>K</original>
    <variation>Q</variation>
    <location>
        <position position="416"/>
    </location>
</feature>
<feature type="sequence variant" id="VAR_039443" description="In dbSNP:rs9934856.">
    <original>L</original>
    <variation>V</variation>
    <location>
        <position position="462"/>
    </location>
</feature>
<feature type="sequence variant" id="VAR_039444" description="In dbSNP:rs7205673.">
    <original>P</original>
    <variation>L</variation>
    <location>
        <position position="512"/>
    </location>
</feature>
<feature type="sequence variant" id="VAR_039445" description="In dbSNP:rs13339342.">
    <original>R</original>
    <variation>H</variation>
    <location>
        <position position="636"/>
    </location>
</feature>
<feature type="sequence variant" id="VAR_039446" description="In dbSNP:rs4889261." evidence="9 10 11 13">
    <original>L</original>
    <variation>P</variation>
    <location>
        <position position="711"/>
    </location>
</feature>
<feature type="sequence variant" id="VAR_039447" description="In dbSNP:rs9935113.">
    <original>G</original>
    <variation>C</variation>
    <location>
        <position position="785"/>
    </location>
</feature>
<feature type="sequence variant" id="VAR_039448" description="In dbSNP:rs1869349.">
    <original>R</original>
    <variation>H</variation>
    <location>
        <position position="849"/>
    </location>
</feature>
<feature type="sequence variant" id="VAR_039449" description="In dbSNP:rs12596941." evidence="9 10">
    <original>A</original>
    <variation>V</variation>
    <location>
        <position position="863"/>
    </location>
</feature>
<feature type="sequence variant" id="VAR_039450" description="In dbSNP:rs745211.">
    <original>L</original>
    <variation>M</variation>
    <location>
        <position position="919"/>
    </location>
</feature>
<feature type="sequence variant" id="VAR_061525" description="In dbSNP:rs34504526.">
    <original>R</original>
    <variation>C</variation>
    <location>
        <position position="998"/>
    </location>
</feature>
<feature type="sequence variant" id="VAR_061526" description="In dbSNP:rs35292101.">
    <original>Q</original>
    <variation>H</variation>
    <location>
        <position position="999"/>
    </location>
</feature>
<feature type="sequence variant" id="VAR_039451" description="In dbSNP:rs12597040.">
    <original>L</original>
    <variation>P</variation>
    <location>
        <position position="1036"/>
    </location>
</feature>
<feature type="sequence variant" id="VAR_039452" description="In dbSNP:rs12931227.">
    <original>M</original>
    <variation>V</variation>
    <location>
        <position position="1042"/>
    </location>
</feature>
<feature type="sequence variant" id="VAR_056705" description="In dbSNP:rs12931217.">
    <original>T</original>
    <variation>A</variation>
    <location>
        <position position="1048"/>
    </location>
</feature>
<feature type="sequence variant" id="VAR_056706" description="In dbSNP:rs16954794.">
    <original>G</original>
    <variation>V</variation>
    <location>
        <position position="1081"/>
    </location>
</feature>
<feature type="sequence variant" id="VAR_056707" description="In dbSNP:rs734824.">
    <original>G</original>
    <variation>W</variation>
    <location>
        <position position="1251"/>
    </location>
</feature>
<feature type="sequence variant" id="VAR_056708" description="In dbSNP:rs1453324." evidence="9 10 12">
    <original>S</original>
    <variation>P</variation>
    <location>
        <position position="1326"/>
    </location>
</feature>
<feature type="sequence variant" id="VAR_061527" description="In dbSNP:rs1453325." evidence="9 12">
    <original>N</original>
    <variation>D</variation>
    <location>
        <position position="1330"/>
    </location>
</feature>
<feature type="sequence variant" id="VAR_061528" description="In dbSNP:rs9938333." evidence="9">
    <original>I</original>
    <variation>V</variation>
    <location>
        <position position="1331"/>
    </location>
</feature>
<feature type="sequence variant" id="VAR_056709" description="In dbSNP:rs1453326.">
    <original>A</original>
    <variation>D</variation>
    <location>
        <position position="1335"/>
    </location>
</feature>
<feature type="sequence variant" id="VAR_056710" description="In dbSNP:rs8050904.">
    <original>T</original>
    <variation>M</variation>
    <location>
        <position position="1406"/>
    </location>
</feature>
<feature type="sequence variant" id="VAR_056711" description="In dbSNP:rs16954775.">
    <original>A</original>
    <variation>V</variation>
    <location>
        <position position="1527"/>
    </location>
</feature>
<feature type="sequence variant" id="VAR_056712" description="In dbSNP:rs9921827.">
    <original>Q</original>
    <variation>R</variation>
    <location>
        <position position="1616"/>
    </location>
</feature>
<feature type="sequence variant" id="VAR_056713" description="In dbSNP:rs9921748.">
    <original>M</original>
    <variation>V</variation>
    <location>
        <position position="1645"/>
    </location>
</feature>
<feature type="sequence variant" id="VAR_056714" description="In dbSNP:rs7192948.">
    <original>S</original>
    <variation>Y</variation>
    <location>
        <position position="1665"/>
    </location>
</feature>
<feature type="sequence variant" id="VAR_056715" description="In dbSNP:rs7194136.">
    <original>Q</original>
    <variation>H</variation>
    <location>
        <position position="1701"/>
    </location>
</feature>
<feature type="sequence variant" id="VAR_061529" description="In dbSNP:rs35941327.">
    <original>A</original>
    <variation>V</variation>
    <location>
        <position position="1739"/>
    </location>
</feature>
<feature type="sequence variant" id="VAR_056716" description="In dbSNP:rs4889244.">
    <original>G</original>
    <variation>R</variation>
    <location>
        <position position="1848"/>
    </location>
</feature>
<feature type="sequence variant" id="VAR_056717" description="In dbSNP:rs12918619." evidence="9">
    <original>M</original>
    <variation>V</variation>
    <location>
        <position position="1867"/>
    </location>
</feature>
<feature type="sequence variant" id="VAR_056718" description="In dbSNP:rs16954722." evidence="12">
    <original>Q</original>
    <variation>R</variation>
    <location>
        <position position="2036"/>
    </location>
</feature>
<feature type="sequence variant" id="VAR_056719" description="In dbSNP:rs7206183." evidence="12">
    <original>P</original>
    <variation>L</variation>
    <location>
        <position position="2046"/>
    </location>
</feature>
<feature type="sequence variant" id="VAR_056720" description="In dbSNP:rs16954717." evidence="12">
    <original>A</original>
    <variation>T</variation>
    <location>
        <position position="2055"/>
    </location>
</feature>
<feature type="sequence variant" id="VAR_059551" description="In dbSNP:rs8050204.">
    <original>L</original>
    <variation>I</variation>
    <location>
        <position position="2119"/>
    </location>
</feature>
<feature type="sequence variant" id="VAR_059552" description="In dbSNP:rs4889241." evidence="10 11 12">
    <original>S</original>
    <variation>F</variation>
    <location>
        <position position="2139"/>
    </location>
</feature>
<feature type="sequence variant" id="VAR_061530" description="In dbSNP:rs4889238." evidence="11 12">
    <original>S</original>
    <variation>R</variation>
    <location>
        <position position="2209"/>
    </location>
</feature>
<feature type="sequence variant" id="VAR_059553" description="In dbSNP:rs8054182." evidence="10 11">
    <original>M</original>
    <variation>I</variation>
    <location>
        <position position="2315"/>
    </location>
</feature>
<feature type="sequence conflict" description="In Ref. 4; BAC05222." evidence="17" ref="4">
    <original>E</original>
    <variation>G</variation>
    <location>
        <position position="783"/>
    </location>
</feature>
<feature type="sequence conflict" description="In Ref. 1; AAO32796." evidence="17" ref="1">
    <original>R</original>
    <variation>S</variation>
    <location>
        <position position="1421"/>
    </location>
</feature>
<feature type="sequence conflict" description="In Ref. 5; BAB67772." evidence="17" ref="5">
    <original>S</original>
    <variation>P</variation>
    <location>
        <position position="1774"/>
    </location>
</feature>
<feature type="sequence conflict" description="In Ref. 5; BAB67772." evidence="17" ref="5">
    <original>P</original>
    <variation>H</variation>
    <location>
        <position position="1776"/>
    </location>
</feature>
<feature type="sequence conflict" description="In Ref. 3; AAQ73173." evidence="17" ref="3">
    <original>Y</original>
    <variation>S</variation>
    <location>
        <position position="2049"/>
    </location>
</feature>
<feature type="sequence conflict" description="In Ref. 3; AAQ73173." evidence="17" ref="3">
    <original>E</original>
    <variation>A</variation>
    <location>
        <position position="2078"/>
    </location>
</feature>
<feature type="sequence conflict" description="In Ref. 1; AAO32796." evidence="17" ref="1">
    <original>STSR</original>
    <variation>KHVK</variation>
    <location>
        <begin position="2114"/>
        <end position="2117"/>
    </location>
</feature>
<feature type="sequence conflict" description="In Ref. 3; AAQ73173." evidence="17" ref="3">
    <original>V</original>
    <variation>G</variation>
    <location>
        <position position="2202"/>
    </location>
</feature>
<accession>Q7Z442</accession>
<accession>Q6UEE1</accession>
<accession>Q6ZN46</accession>
<accession>Q6ZSP2</accession>
<accession>Q8N1H9</accession>
<accession>Q96CL2</accession>
<accession>Q96Q08</accession>
<evidence type="ECO:0000250" key="1"/>
<evidence type="ECO:0000255" key="2"/>
<evidence type="ECO:0000255" key="3">
    <source>
        <dbReference type="PROSITE-ProRule" id="PRU00040"/>
    </source>
</evidence>
<evidence type="ECO:0000255" key="4">
    <source>
        <dbReference type="PROSITE-ProRule" id="PRU00098"/>
    </source>
</evidence>
<evidence type="ECO:0000255" key="5">
    <source>
        <dbReference type="PROSITE-ProRule" id="PRU00152"/>
    </source>
</evidence>
<evidence type="ECO:0000255" key="6">
    <source>
        <dbReference type="PROSITE-ProRule" id="PRU00260"/>
    </source>
</evidence>
<evidence type="ECO:0000255" key="7">
    <source>
        <dbReference type="PROSITE-ProRule" id="PRU00511"/>
    </source>
</evidence>
<evidence type="ECO:0000256" key="8">
    <source>
        <dbReference type="SAM" id="MobiDB-lite"/>
    </source>
</evidence>
<evidence type="ECO:0000269" key="9">
    <source>
    </source>
</evidence>
<evidence type="ECO:0000269" key="10">
    <source>
    </source>
</evidence>
<evidence type="ECO:0000269" key="11">
    <source>
    </source>
</evidence>
<evidence type="ECO:0000269" key="12">
    <source>
    </source>
</evidence>
<evidence type="ECO:0000269" key="13">
    <source>
    </source>
</evidence>
<evidence type="ECO:0000303" key="14">
    <source>
    </source>
</evidence>
<evidence type="ECO:0000303" key="15">
    <source>
    </source>
</evidence>
<evidence type="ECO:0000303" key="16">
    <source>
    </source>
</evidence>
<evidence type="ECO:0000305" key="17"/>
<evidence type="ECO:0000312" key="18">
    <source>
        <dbReference type="HGNC" id="HGNC:21715"/>
    </source>
</evidence>
<protein>
    <recommendedName>
        <fullName evidence="17">Polycystin-1-like protein 2</fullName>
        <shortName evidence="15">Polycystin-1L2</shortName>
    </recommendedName>
    <alternativeName>
        <fullName>PC1-like 2 protein</fullName>
    </alternativeName>
    <alternativeName>
        <fullName>Polycystic kidney disease protein 1-like 2</fullName>
    </alternativeName>
</protein>
<organism>
    <name type="scientific">Homo sapiens</name>
    <name type="common">Human</name>
    <dbReference type="NCBI Taxonomy" id="9606"/>
    <lineage>
        <taxon>Eukaryota</taxon>
        <taxon>Metazoa</taxon>
        <taxon>Chordata</taxon>
        <taxon>Craniata</taxon>
        <taxon>Vertebrata</taxon>
        <taxon>Euteleostomi</taxon>
        <taxon>Mammalia</taxon>
        <taxon>Eutheria</taxon>
        <taxon>Euarchontoglires</taxon>
        <taxon>Primates</taxon>
        <taxon>Haplorrhini</taxon>
        <taxon>Catarrhini</taxon>
        <taxon>Hominidae</taxon>
        <taxon>Homo</taxon>
    </lineage>
</organism>
<gene>
    <name evidence="18" type="primary">PKD1L2</name>
    <name type="synonym">KIAA1879</name>
    <name evidence="15" type="synonym">PC1L2</name>
</gene>
<keyword id="KW-0025">Alternative splicing</keyword>
<keyword id="KW-1015">Disulfide bond</keyword>
<keyword id="KW-0325">Glycoprotein</keyword>
<keyword id="KW-0407">Ion channel</keyword>
<keyword id="KW-0406">Ion transport</keyword>
<keyword id="KW-0430">Lectin</keyword>
<keyword id="KW-0472">Membrane</keyword>
<keyword id="KW-1185">Reference proteome</keyword>
<keyword id="KW-0732">Signal</keyword>
<keyword id="KW-0812">Transmembrane</keyword>
<keyword id="KW-1133">Transmembrane helix</keyword>
<keyword id="KW-0813">Transport</keyword>
<dbReference type="EMBL" id="AY164483">
    <property type="protein sequence ID" value="AAO32796.1"/>
    <property type="molecule type" value="mRNA"/>
</dbReference>
<dbReference type="EMBL" id="AY371495">
    <property type="protein sequence ID" value="AAQ73173.1"/>
    <property type="status" value="ALT_FRAME"/>
    <property type="molecule type" value="mRNA"/>
</dbReference>
<dbReference type="EMBL" id="AB067466">
    <property type="protein sequence ID" value="BAB67772.1"/>
    <property type="status" value="ALT_SEQ"/>
    <property type="molecule type" value="mRNA"/>
</dbReference>
<dbReference type="EMBL" id="AK098052">
    <property type="protein sequence ID" value="BAC05222.1"/>
    <property type="status" value="ALT_INIT"/>
    <property type="molecule type" value="mRNA"/>
</dbReference>
<dbReference type="EMBL" id="AK127266">
    <property type="protein sequence ID" value="BAC86906.1"/>
    <property type="molecule type" value="mRNA"/>
</dbReference>
<dbReference type="EMBL" id="AK131378">
    <property type="protein sequence ID" value="BAD18529.1"/>
    <property type="status" value="ALT_SEQ"/>
    <property type="molecule type" value="mRNA"/>
</dbReference>
<dbReference type="EMBL" id="AC092718">
    <property type="status" value="NOT_ANNOTATED_CDS"/>
    <property type="molecule type" value="Genomic_DNA"/>
</dbReference>
<dbReference type="EMBL" id="AC131888">
    <property type="status" value="NOT_ANNOTATED_CDS"/>
    <property type="molecule type" value="Genomic_DNA"/>
</dbReference>
<dbReference type="EMBL" id="BC004562">
    <property type="protein sequence ID" value="AAH04562.1"/>
    <property type="molecule type" value="mRNA"/>
</dbReference>
<dbReference type="EMBL" id="BC014157">
    <property type="protein sequence ID" value="AAH14157.1"/>
    <property type="molecule type" value="mRNA"/>
</dbReference>
<dbReference type="CCDS" id="CCDS61999.1">
    <molecule id="Q7Z442-4"/>
</dbReference>
<dbReference type="RefSeq" id="NP_001070248.1">
    <property type="nucleotide sequence ID" value="NM_001076780.1"/>
</dbReference>
<dbReference type="RefSeq" id="NP_001265352.1">
    <molecule id="Q7Z442-4"/>
    <property type="nucleotide sequence ID" value="NM_001278423.2"/>
</dbReference>
<dbReference type="RefSeq" id="NP_001265354.1">
    <property type="nucleotide sequence ID" value="NM_001278425.1"/>
</dbReference>
<dbReference type="RefSeq" id="NP_443124.3">
    <property type="nucleotide sequence ID" value="NM_052892.3"/>
</dbReference>
<dbReference type="SMR" id="Q7Z442"/>
<dbReference type="BioGRID" id="125342">
    <property type="interactions" value="22"/>
</dbReference>
<dbReference type="FunCoup" id="Q7Z442">
    <property type="interactions" value="101"/>
</dbReference>
<dbReference type="IntAct" id="Q7Z442">
    <property type="interactions" value="19"/>
</dbReference>
<dbReference type="MEROPS" id="P02.038"/>
<dbReference type="TCDB" id="1.A.5.1.8">
    <property type="family name" value="the polycystin cation channel (pcc) family"/>
</dbReference>
<dbReference type="GlyCosmos" id="Q7Z442">
    <property type="glycosylation" value="8 sites, No reported glycans"/>
</dbReference>
<dbReference type="GlyGen" id="Q7Z442">
    <property type="glycosylation" value="11 sites, 1 O-linked glycan (2 sites)"/>
</dbReference>
<dbReference type="iPTMnet" id="Q7Z442"/>
<dbReference type="PhosphoSitePlus" id="Q7Z442"/>
<dbReference type="BioMuta" id="PKD1L2"/>
<dbReference type="DMDM" id="317373538"/>
<dbReference type="jPOST" id="Q7Z442"/>
<dbReference type="MassIVE" id="Q7Z442"/>
<dbReference type="PaxDb" id="9606-ENSP00000485172"/>
<dbReference type="Antibodypedia" id="2579">
    <property type="antibodies" value="88 antibodies from 17 providers"/>
</dbReference>
<dbReference type="DNASU" id="114780"/>
<dbReference type="Ensembl" id="ENST00000527937.1">
    <molecule id="Q7Z442-6"/>
    <property type="protein sequence ID" value="ENSP00000432818.1"/>
    <property type="gene ID" value="ENSG00000166473.20"/>
</dbReference>
<dbReference type="Ensembl" id="ENST00000531391.5">
    <molecule id="Q7Z442-4"/>
    <property type="protein sequence ID" value="ENSP00000436309.1"/>
    <property type="gene ID" value="ENSG00000166473.20"/>
</dbReference>
<dbReference type="GeneID" id="114780"/>
<dbReference type="KEGG" id="hsa:114780"/>
<dbReference type="UCSC" id="uc002fgi.5">
    <molecule id="Q7Z442-1"/>
    <property type="organism name" value="human"/>
</dbReference>
<dbReference type="AGR" id="HGNC:21715"/>
<dbReference type="CTD" id="114780"/>
<dbReference type="DisGeNET" id="114780"/>
<dbReference type="GeneCards" id="PKD1L2"/>
<dbReference type="HGNC" id="HGNC:21715">
    <property type="gene designation" value="PKD1L2"/>
</dbReference>
<dbReference type="HPA" id="ENSG00000166473">
    <property type="expression patterns" value="Tissue enhanced (adipose tissue, choroid plexus, heart muscle)"/>
</dbReference>
<dbReference type="MalaCards" id="PKD1L2"/>
<dbReference type="MIM" id="607894">
    <property type="type" value="gene"/>
</dbReference>
<dbReference type="neXtProt" id="NX_Q7Z442"/>
<dbReference type="OpenTargets" id="ENSG00000166473"/>
<dbReference type="PharmGKB" id="PA134874396"/>
<dbReference type="VEuPathDB" id="HostDB:ENSG00000166473"/>
<dbReference type="eggNOG" id="KOG3599">
    <property type="taxonomic scope" value="Eukaryota"/>
</dbReference>
<dbReference type="GeneTree" id="ENSGT00940000161577"/>
<dbReference type="HOGENOM" id="CLU_908990_0_0_1"/>
<dbReference type="InParanoid" id="Q7Z442"/>
<dbReference type="OrthoDB" id="10264154at2759"/>
<dbReference type="PAN-GO" id="Q7Z442">
    <property type="GO annotations" value="3 GO annotations based on evolutionary models"/>
</dbReference>
<dbReference type="PhylomeDB" id="Q7Z442"/>
<dbReference type="PathwayCommons" id="Q7Z442"/>
<dbReference type="SignaLink" id="Q7Z442"/>
<dbReference type="BioGRID-ORCS" id="114780">
    <property type="hits" value="8 hits in 604 CRISPR screens"/>
</dbReference>
<dbReference type="ChiTaRS" id="PKD1L2">
    <property type="organism name" value="human"/>
</dbReference>
<dbReference type="GenomeRNAi" id="114780"/>
<dbReference type="Pharos" id="Q7Z442">
    <property type="development level" value="Tbio"/>
</dbReference>
<dbReference type="PRO" id="PR:Q7Z442"/>
<dbReference type="Proteomes" id="UP000005640">
    <property type="component" value="Chromosome 16"/>
</dbReference>
<dbReference type="RNAct" id="Q7Z442">
    <property type="molecule type" value="protein"/>
</dbReference>
<dbReference type="Bgee" id="ENSG00000166473">
    <property type="expression patterns" value="Expressed in seminal vesicle and 100 other cell types or tissues"/>
</dbReference>
<dbReference type="ExpressionAtlas" id="Q7Z442">
    <property type="expression patterns" value="baseline and differential"/>
</dbReference>
<dbReference type="GO" id="GO:0016020">
    <property type="term" value="C:membrane"/>
    <property type="evidence" value="ECO:0000318"/>
    <property type="project" value="GO_Central"/>
</dbReference>
<dbReference type="GO" id="GO:0005262">
    <property type="term" value="F:calcium channel activity"/>
    <property type="evidence" value="ECO:0000318"/>
    <property type="project" value="GO_Central"/>
</dbReference>
<dbReference type="GO" id="GO:0005509">
    <property type="term" value="F:calcium ion binding"/>
    <property type="evidence" value="ECO:0007669"/>
    <property type="project" value="InterPro"/>
</dbReference>
<dbReference type="GO" id="GO:0030246">
    <property type="term" value="F:carbohydrate binding"/>
    <property type="evidence" value="ECO:0007669"/>
    <property type="project" value="UniProtKB-KW"/>
</dbReference>
<dbReference type="GO" id="GO:0050982">
    <property type="term" value="P:detection of mechanical stimulus"/>
    <property type="evidence" value="ECO:0000318"/>
    <property type="project" value="GO_Central"/>
</dbReference>
<dbReference type="CDD" id="cd00037">
    <property type="entry name" value="CLECT"/>
    <property type="match status" value="1"/>
</dbReference>
<dbReference type="CDD" id="cd22831">
    <property type="entry name" value="Gal_Rha_Lectin_PKD1L2"/>
    <property type="match status" value="1"/>
</dbReference>
<dbReference type="CDD" id="cd01752">
    <property type="entry name" value="PLAT_polycystin"/>
    <property type="match status" value="1"/>
</dbReference>
<dbReference type="FunFam" id="2.60.60.20:FF:000008">
    <property type="entry name" value="Polycystic kidney disease 1-like 2, isoform CRA_a"/>
    <property type="match status" value="1"/>
</dbReference>
<dbReference type="FunFam" id="1.10.287.70:FF:000086">
    <property type="entry name" value="Polycystic kidney disease 2"/>
    <property type="match status" value="1"/>
</dbReference>
<dbReference type="FunFam" id="2.60.220.50:FF:000029">
    <property type="entry name" value="Polycystic kidney disease protein 1-like 2"/>
    <property type="match status" value="1"/>
</dbReference>
<dbReference type="FunFam" id="3.10.100.10:FF:000073">
    <property type="entry name" value="Polycystic kidney disease protein 1-like 2"/>
    <property type="match status" value="1"/>
</dbReference>
<dbReference type="FunFam" id="2.60.120.740:FF:000005">
    <property type="entry name" value="polycystic kidney disease protein 1-like 2"/>
    <property type="match status" value="1"/>
</dbReference>
<dbReference type="Gene3D" id="1.10.287.70">
    <property type="match status" value="1"/>
</dbReference>
<dbReference type="Gene3D" id="2.60.120.740">
    <property type="match status" value="1"/>
</dbReference>
<dbReference type="Gene3D" id="2.60.220.50">
    <property type="match status" value="1"/>
</dbReference>
<dbReference type="Gene3D" id="3.10.100.10">
    <property type="entry name" value="Mannose-Binding Protein A, subunit A"/>
    <property type="match status" value="1"/>
</dbReference>
<dbReference type="Gene3D" id="2.60.60.20">
    <property type="entry name" value="PLAT/LH2 domain"/>
    <property type="match status" value="1"/>
</dbReference>
<dbReference type="InterPro" id="IPR001304">
    <property type="entry name" value="C-type_lectin-like"/>
</dbReference>
<dbReference type="InterPro" id="IPR016186">
    <property type="entry name" value="C-type_lectin-like/link_sf"/>
</dbReference>
<dbReference type="InterPro" id="IPR016187">
    <property type="entry name" value="CTDL_fold"/>
</dbReference>
<dbReference type="InterPro" id="IPR057244">
    <property type="entry name" value="GAIN_B"/>
</dbReference>
<dbReference type="InterPro" id="IPR046338">
    <property type="entry name" value="GAIN_dom_sf"/>
</dbReference>
<dbReference type="InterPro" id="IPR000203">
    <property type="entry name" value="GPS"/>
</dbReference>
<dbReference type="InterPro" id="IPR000922">
    <property type="entry name" value="Lectin_gal-bd_dom"/>
</dbReference>
<dbReference type="InterPro" id="IPR043159">
    <property type="entry name" value="Lectin_gal-bd_sf"/>
</dbReference>
<dbReference type="InterPro" id="IPR002859">
    <property type="entry name" value="PKD/REJ-like"/>
</dbReference>
<dbReference type="InterPro" id="IPR013122">
    <property type="entry name" value="PKD1_2_channel"/>
</dbReference>
<dbReference type="InterPro" id="IPR003915">
    <property type="entry name" value="PKD_2"/>
</dbReference>
<dbReference type="InterPro" id="IPR001024">
    <property type="entry name" value="PLAT/LH2_dom"/>
</dbReference>
<dbReference type="InterPro" id="IPR036392">
    <property type="entry name" value="PLAT/LH2_dom_sf"/>
</dbReference>
<dbReference type="InterPro" id="IPR042060">
    <property type="entry name" value="PLAT_polycystin1"/>
</dbReference>
<dbReference type="InterPro" id="IPR051223">
    <property type="entry name" value="Polycystin"/>
</dbReference>
<dbReference type="InterPro" id="IPR046791">
    <property type="entry name" value="Polycystin_dom"/>
</dbReference>
<dbReference type="InterPro" id="IPR014010">
    <property type="entry name" value="REJ_dom"/>
</dbReference>
<dbReference type="PANTHER" id="PTHR10877">
    <property type="entry name" value="POLYCYSTIN FAMILY MEMBER"/>
    <property type="match status" value="1"/>
</dbReference>
<dbReference type="PANTHER" id="PTHR10877:SF134">
    <property type="entry name" value="POLYCYSTIN-1-LIKE PROTEIN 2"/>
    <property type="match status" value="1"/>
</dbReference>
<dbReference type="Pfam" id="PF01825">
    <property type="entry name" value="GPS"/>
    <property type="match status" value="1"/>
</dbReference>
<dbReference type="Pfam" id="PF00059">
    <property type="entry name" value="Lectin_C"/>
    <property type="match status" value="1"/>
</dbReference>
<dbReference type="Pfam" id="PF08016">
    <property type="entry name" value="PKD_channel"/>
    <property type="match status" value="1"/>
</dbReference>
<dbReference type="Pfam" id="PF01477">
    <property type="entry name" value="PLAT"/>
    <property type="match status" value="1"/>
</dbReference>
<dbReference type="Pfam" id="PF20519">
    <property type="entry name" value="Polycystin_dom"/>
    <property type="match status" value="1"/>
</dbReference>
<dbReference type="Pfam" id="PF02010">
    <property type="entry name" value="REJ"/>
    <property type="match status" value="1"/>
</dbReference>
<dbReference type="Pfam" id="PF02140">
    <property type="entry name" value="SUEL_Lectin"/>
    <property type="match status" value="1"/>
</dbReference>
<dbReference type="PRINTS" id="PR01433">
    <property type="entry name" value="POLYCYSTIN2"/>
</dbReference>
<dbReference type="SMART" id="SM00034">
    <property type="entry name" value="CLECT"/>
    <property type="match status" value="1"/>
</dbReference>
<dbReference type="SMART" id="SM00303">
    <property type="entry name" value="GPS"/>
    <property type="match status" value="1"/>
</dbReference>
<dbReference type="SMART" id="SM00308">
    <property type="entry name" value="LH2"/>
    <property type="match status" value="1"/>
</dbReference>
<dbReference type="SUPFAM" id="SSF56436">
    <property type="entry name" value="C-type lectin-like"/>
    <property type="match status" value="1"/>
</dbReference>
<dbReference type="SUPFAM" id="SSF49723">
    <property type="entry name" value="Lipase/lipooxygenase domain (PLAT/LH2 domain)"/>
    <property type="match status" value="1"/>
</dbReference>
<dbReference type="PROSITE" id="PS50041">
    <property type="entry name" value="C_TYPE_LECTIN_2"/>
    <property type="match status" value="1"/>
</dbReference>
<dbReference type="PROSITE" id="PS50221">
    <property type="entry name" value="GAIN_B"/>
    <property type="match status" value="1"/>
</dbReference>
<dbReference type="PROSITE" id="PS50095">
    <property type="entry name" value="PLAT"/>
    <property type="match status" value="1"/>
</dbReference>
<dbReference type="PROSITE" id="PS51111">
    <property type="entry name" value="REJ"/>
    <property type="match status" value="1"/>
</dbReference>
<dbReference type="PROSITE" id="PS50228">
    <property type="entry name" value="SUEL_LECTIN"/>
    <property type="match status" value="1"/>
</dbReference>